<comment type="function">
    <text evidence="1">Forms part of the ribosomal stalk which helps the ribosome interact with GTP-bound translation factors.</text>
</comment>
<comment type="subunit">
    <text evidence="1">Part of the ribosomal stalk of the 50S ribosomal subunit. Interacts with L10 and the large rRNA to form the base of the stalk. L10 forms an elongated spine to which L12 dimers bind in a sequential fashion forming a multimeric L10(L12)X complex.</text>
</comment>
<comment type="PTM">
    <text evidence="1">One or more lysine residues are methylated.</text>
</comment>
<comment type="similarity">
    <text evidence="1">Belongs to the universal ribosomal protein uL11 family.</text>
</comment>
<proteinExistence type="inferred from homology"/>
<reference key="1">
    <citation type="submission" date="2008-06" db="EMBL/GenBank/DDBJ databases">
        <title>Complete sequence of Pelodictyon phaeoclathratiforme BU-1.</title>
        <authorList>
            <consortium name="US DOE Joint Genome Institute"/>
            <person name="Lucas S."/>
            <person name="Copeland A."/>
            <person name="Lapidus A."/>
            <person name="Glavina del Rio T."/>
            <person name="Dalin E."/>
            <person name="Tice H."/>
            <person name="Bruce D."/>
            <person name="Goodwin L."/>
            <person name="Pitluck S."/>
            <person name="Schmutz J."/>
            <person name="Larimer F."/>
            <person name="Land M."/>
            <person name="Hauser L."/>
            <person name="Kyrpides N."/>
            <person name="Mikhailova N."/>
            <person name="Liu Z."/>
            <person name="Li T."/>
            <person name="Zhao F."/>
            <person name="Overmann J."/>
            <person name="Bryant D.A."/>
            <person name="Richardson P."/>
        </authorList>
    </citation>
    <scope>NUCLEOTIDE SEQUENCE [LARGE SCALE GENOMIC DNA]</scope>
    <source>
        <strain>DSM 5477 / BU-1</strain>
    </source>
</reference>
<organism>
    <name type="scientific">Pelodictyon phaeoclathratiforme (strain DSM 5477 / BU-1)</name>
    <dbReference type="NCBI Taxonomy" id="324925"/>
    <lineage>
        <taxon>Bacteria</taxon>
        <taxon>Pseudomonadati</taxon>
        <taxon>Chlorobiota</taxon>
        <taxon>Chlorobiia</taxon>
        <taxon>Chlorobiales</taxon>
        <taxon>Chlorobiaceae</taxon>
        <taxon>Chlorobium/Pelodictyon group</taxon>
        <taxon>Pelodictyon</taxon>
    </lineage>
</organism>
<keyword id="KW-0488">Methylation</keyword>
<keyword id="KW-1185">Reference proteome</keyword>
<keyword id="KW-0687">Ribonucleoprotein</keyword>
<keyword id="KW-0689">Ribosomal protein</keyword>
<keyword id="KW-0694">RNA-binding</keyword>
<keyword id="KW-0699">rRNA-binding</keyword>
<feature type="chain" id="PRO_1000195684" description="Large ribosomal subunit protein uL11">
    <location>
        <begin position="1"/>
        <end position="141"/>
    </location>
</feature>
<gene>
    <name evidence="1" type="primary">rplK</name>
    <name type="ordered locus">Ppha_2683</name>
</gene>
<dbReference type="EMBL" id="CP001110">
    <property type="protein sequence ID" value="ACF44842.1"/>
    <property type="molecule type" value="Genomic_DNA"/>
</dbReference>
<dbReference type="RefSeq" id="WP_012509314.1">
    <property type="nucleotide sequence ID" value="NC_011060.1"/>
</dbReference>
<dbReference type="SMR" id="B4SG15"/>
<dbReference type="STRING" id="324925.Ppha_2683"/>
<dbReference type="KEGG" id="pph:Ppha_2683"/>
<dbReference type="eggNOG" id="COG0080">
    <property type="taxonomic scope" value="Bacteria"/>
</dbReference>
<dbReference type="HOGENOM" id="CLU_074237_2_1_10"/>
<dbReference type="OrthoDB" id="9802408at2"/>
<dbReference type="Proteomes" id="UP000002724">
    <property type="component" value="Chromosome"/>
</dbReference>
<dbReference type="GO" id="GO:0022625">
    <property type="term" value="C:cytosolic large ribosomal subunit"/>
    <property type="evidence" value="ECO:0007669"/>
    <property type="project" value="TreeGrafter"/>
</dbReference>
<dbReference type="GO" id="GO:0070180">
    <property type="term" value="F:large ribosomal subunit rRNA binding"/>
    <property type="evidence" value="ECO:0007669"/>
    <property type="project" value="UniProtKB-UniRule"/>
</dbReference>
<dbReference type="GO" id="GO:0003735">
    <property type="term" value="F:structural constituent of ribosome"/>
    <property type="evidence" value="ECO:0007669"/>
    <property type="project" value="InterPro"/>
</dbReference>
<dbReference type="GO" id="GO:0006412">
    <property type="term" value="P:translation"/>
    <property type="evidence" value="ECO:0007669"/>
    <property type="project" value="UniProtKB-UniRule"/>
</dbReference>
<dbReference type="CDD" id="cd00349">
    <property type="entry name" value="Ribosomal_L11"/>
    <property type="match status" value="1"/>
</dbReference>
<dbReference type="FunFam" id="1.10.10.250:FF:000001">
    <property type="entry name" value="50S ribosomal protein L11"/>
    <property type="match status" value="1"/>
</dbReference>
<dbReference type="FunFam" id="3.30.1550.10:FF:000001">
    <property type="entry name" value="50S ribosomal protein L11"/>
    <property type="match status" value="1"/>
</dbReference>
<dbReference type="Gene3D" id="1.10.10.250">
    <property type="entry name" value="Ribosomal protein L11, C-terminal domain"/>
    <property type="match status" value="1"/>
</dbReference>
<dbReference type="Gene3D" id="3.30.1550.10">
    <property type="entry name" value="Ribosomal protein L11/L12, N-terminal domain"/>
    <property type="match status" value="1"/>
</dbReference>
<dbReference type="HAMAP" id="MF_00736">
    <property type="entry name" value="Ribosomal_uL11"/>
    <property type="match status" value="1"/>
</dbReference>
<dbReference type="InterPro" id="IPR000911">
    <property type="entry name" value="Ribosomal_uL11"/>
</dbReference>
<dbReference type="InterPro" id="IPR006519">
    <property type="entry name" value="Ribosomal_uL11_bac-typ"/>
</dbReference>
<dbReference type="InterPro" id="IPR020783">
    <property type="entry name" value="Ribosomal_uL11_C"/>
</dbReference>
<dbReference type="InterPro" id="IPR036769">
    <property type="entry name" value="Ribosomal_uL11_C_sf"/>
</dbReference>
<dbReference type="InterPro" id="IPR020784">
    <property type="entry name" value="Ribosomal_uL11_N"/>
</dbReference>
<dbReference type="InterPro" id="IPR036796">
    <property type="entry name" value="Ribosomal_uL11_N_sf"/>
</dbReference>
<dbReference type="NCBIfam" id="TIGR01632">
    <property type="entry name" value="L11_bact"/>
    <property type="match status" value="1"/>
</dbReference>
<dbReference type="PANTHER" id="PTHR11661">
    <property type="entry name" value="60S RIBOSOMAL PROTEIN L12"/>
    <property type="match status" value="1"/>
</dbReference>
<dbReference type="PANTHER" id="PTHR11661:SF1">
    <property type="entry name" value="LARGE RIBOSOMAL SUBUNIT PROTEIN UL11M"/>
    <property type="match status" value="1"/>
</dbReference>
<dbReference type="Pfam" id="PF00298">
    <property type="entry name" value="Ribosomal_L11"/>
    <property type="match status" value="1"/>
</dbReference>
<dbReference type="Pfam" id="PF03946">
    <property type="entry name" value="Ribosomal_L11_N"/>
    <property type="match status" value="1"/>
</dbReference>
<dbReference type="SMART" id="SM00649">
    <property type="entry name" value="RL11"/>
    <property type="match status" value="1"/>
</dbReference>
<dbReference type="SUPFAM" id="SSF54747">
    <property type="entry name" value="Ribosomal L11/L12e N-terminal domain"/>
    <property type="match status" value="1"/>
</dbReference>
<dbReference type="SUPFAM" id="SSF46906">
    <property type="entry name" value="Ribosomal protein L11, C-terminal domain"/>
    <property type="match status" value="1"/>
</dbReference>
<protein>
    <recommendedName>
        <fullName evidence="1">Large ribosomal subunit protein uL11</fullName>
    </recommendedName>
    <alternativeName>
        <fullName evidence="2">50S ribosomal protein L11</fullName>
    </alternativeName>
</protein>
<name>RL11_PELPB</name>
<accession>B4SG15</accession>
<evidence type="ECO:0000255" key="1">
    <source>
        <dbReference type="HAMAP-Rule" id="MF_00736"/>
    </source>
</evidence>
<evidence type="ECO:0000305" key="2"/>
<sequence>MAKKVLGFIKLQIPAGAANPAPPVGPALGQKGVNIMEFCKQFNAKTQSEAGMIIPVVITVYSDKSFTFITKTPPAAVLLLKEASLKKGSGEPNRNKVGTVTRDQVRKIAELKMPDLNAVNSEGAEEMIMGTARSMGIVVEG</sequence>